<proteinExistence type="inferred from homology"/>
<reference key="1">
    <citation type="journal article" date="2009" name="PLoS Pathog.">
        <title>Molecular evolutionary consequences of niche restriction in Francisella tularensis, a facultative intracellular pathogen.</title>
        <authorList>
            <person name="Larsson P."/>
            <person name="Elfsmark D."/>
            <person name="Svensson K."/>
            <person name="Wikstroem P."/>
            <person name="Forsman M."/>
            <person name="Brettin T."/>
            <person name="Keim P."/>
            <person name="Johansson A."/>
        </authorList>
    </citation>
    <scope>NUCLEOTIDE SEQUENCE [LARGE SCALE GENOMIC DNA]</scope>
    <source>
        <strain>FSC147</strain>
    </source>
</reference>
<sequence>MLQPKRTKFRKQQKLRNRGLAHRGNKVSFGEFGLQATSRGRITARQIEAGRRAISRHIKRGGKIWIRIFPDKPITQKPLEVRMGKGKGSVEYWVAQIQPGRVLYEITGVKEELAREAFARAAAKMPVQTTFVEKQVM</sequence>
<name>RL16_FRATM</name>
<organism>
    <name type="scientific">Francisella tularensis subsp. mediasiatica (strain FSC147)</name>
    <dbReference type="NCBI Taxonomy" id="441952"/>
    <lineage>
        <taxon>Bacteria</taxon>
        <taxon>Pseudomonadati</taxon>
        <taxon>Pseudomonadota</taxon>
        <taxon>Gammaproteobacteria</taxon>
        <taxon>Thiotrichales</taxon>
        <taxon>Francisellaceae</taxon>
        <taxon>Francisella</taxon>
    </lineage>
</organism>
<keyword id="KW-0687">Ribonucleoprotein</keyword>
<keyword id="KW-0689">Ribosomal protein</keyword>
<keyword id="KW-0694">RNA-binding</keyword>
<keyword id="KW-0699">rRNA-binding</keyword>
<keyword id="KW-0820">tRNA-binding</keyword>
<protein>
    <recommendedName>
        <fullName evidence="1">Large ribosomal subunit protein uL16</fullName>
    </recommendedName>
    <alternativeName>
        <fullName evidence="2">50S ribosomal protein L16</fullName>
    </alternativeName>
</protein>
<feature type="chain" id="PRO_1000142976" description="Large ribosomal subunit protein uL16">
    <location>
        <begin position="1"/>
        <end position="137"/>
    </location>
</feature>
<evidence type="ECO:0000255" key="1">
    <source>
        <dbReference type="HAMAP-Rule" id="MF_01342"/>
    </source>
</evidence>
<evidence type="ECO:0000305" key="2"/>
<comment type="function">
    <text evidence="1">Binds 23S rRNA and is also seen to make contacts with the A and possibly P site tRNAs.</text>
</comment>
<comment type="subunit">
    <text evidence="1">Part of the 50S ribosomal subunit.</text>
</comment>
<comment type="similarity">
    <text evidence="1">Belongs to the universal ribosomal protein uL16 family.</text>
</comment>
<gene>
    <name evidence="1" type="primary">rplP</name>
    <name type="ordered locus">FTM_1520</name>
</gene>
<accession>B2SDX8</accession>
<dbReference type="EMBL" id="CP000915">
    <property type="protein sequence ID" value="ACD31342.1"/>
    <property type="molecule type" value="Genomic_DNA"/>
</dbReference>
<dbReference type="SMR" id="B2SDX8"/>
<dbReference type="KEGG" id="ftm:FTM_1520"/>
<dbReference type="HOGENOM" id="CLU_078858_2_1_6"/>
<dbReference type="GO" id="GO:0022625">
    <property type="term" value="C:cytosolic large ribosomal subunit"/>
    <property type="evidence" value="ECO:0007669"/>
    <property type="project" value="TreeGrafter"/>
</dbReference>
<dbReference type="GO" id="GO:0019843">
    <property type="term" value="F:rRNA binding"/>
    <property type="evidence" value="ECO:0007669"/>
    <property type="project" value="UniProtKB-UniRule"/>
</dbReference>
<dbReference type="GO" id="GO:0003735">
    <property type="term" value="F:structural constituent of ribosome"/>
    <property type="evidence" value="ECO:0007669"/>
    <property type="project" value="InterPro"/>
</dbReference>
<dbReference type="GO" id="GO:0000049">
    <property type="term" value="F:tRNA binding"/>
    <property type="evidence" value="ECO:0007669"/>
    <property type="project" value="UniProtKB-KW"/>
</dbReference>
<dbReference type="GO" id="GO:0006412">
    <property type="term" value="P:translation"/>
    <property type="evidence" value="ECO:0007669"/>
    <property type="project" value="UniProtKB-UniRule"/>
</dbReference>
<dbReference type="CDD" id="cd01433">
    <property type="entry name" value="Ribosomal_L16_L10e"/>
    <property type="match status" value="1"/>
</dbReference>
<dbReference type="FunFam" id="3.90.1170.10:FF:000001">
    <property type="entry name" value="50S ribosomal protein L16"/>
    <property type="match status" value="1"/>
</dbReference>
<dbReference type="Gene3D" id="3.90.1170.10">
    <property type="entry name" value="Ribosomal protein L10e/L16"/>
    <property type="match status" value="1"/>
</dbReference>
<dbReference type="HAMAP" id="MF_01342">
    <property type="entry name" value="Ribosomal_uL16"/>
    <property type="match status" value="1"/>
</dbReference>
<dbReference type="InterPro" id="IPR047873">
    <property type="entry name" value="Ribosomal_uL16"/>
</dbReference>
<dbReference type="InterPro" id="IPR000114">
    <property type="entry name" value="Ribosomal_uL16_bact-type"/>
</dbReference>
<dbReference type="InterPro" id="IPR020798">
    <property type="entry name" value="Ribosomal_uL16_CS"/>
</dbReference>
<dbReference type="InterPro" id="IPR016180">
    <property type="entry name" value="Ribosomal_uL16_dom"/>
</dbReference>
<dbReference type="InterPro" id="IPR036920">
    <property type="entry name" value="Ribosomal_uL16_sf"/>
</dbReference>
<dbReference type="NCBIfam" id="TIGR01164">
    <property type="entry name" value="rplP_bact"/>
    <property type="match status" value="1"/>
</dbReference>
<dbReference type="PANTHER" id="PTHR12220">
    <property type="entry name" value="50S/60S RIBOSOMAL PROTEIN L16"/>
    <property type="match status" value="1"/>
</dbReference>
<dbReference type="PANTHER" id="PTHR12220:SF13">
    <property type="entry name" value="LARGE RIBOSOMAL SUBUNIT PROTEIN UL16M"/>
    <property type="match status" value="1"/>
</dbReference>
<dbReference type="Pfam" id="PF00252">
    <property type="entry name" value="Ribosomal_L16"/>
    <property type="match status" value="1"/>
</dbReference>
<dbReference type="PRINTS" id="PR00060">
    <property type="entry name" value="RIBOSOMALL16"/>
</dbReference>
<dbReference type="SUPFAM" id="SSF54686">
    <property type="entry name" value="Ribosomal protein L16p/L10e"/>
    <property type="match status" value="1"/>
</dbReference>
<dbReference type="PROSITE" id="PS00586">
    <property type="entry name" value="RIBOSOMAL_L16_1"/>
    <property type="match status" value="1"/>
</dbReference>
<dbReference type="PROSITE" id="PS00701">
    <property type="entry name" value="RIBOSOMAL_L16_2"/>
    <property type="match status" value="1"/>
</dbReference>